<organism>
    <name type="scientific">Haemophilus influenzae (strain ATCC 51907 / DSM 11121 / KW20 / Rd)</name>
    <dbReference type="NCBI Taxonomy" id="71421"/>
    <lineage>
        <taxon>Bacteria</taxon>
        <taxon>Pseudomonadati</taxon>
        <taxon>Pseudomonadota</taxon>
        <taxon>Gammaproteobacteria</taxon>
        <taxon>Pasteurellales</taxon>
        <taxon>Pasteurellaceae</taxon>
        <taxon>Haemophilus</taxon>
    </lineage>
</organism>
<dbReference type="EMBL" id="L42023">
    <property type="protein sequence ID" value="AAC21791.1"/>
    <property type="molecule type" value="Genomic_DNA"/>
</dbReference>
<dbReference type="PIR" id="A64143">
    <property type="entry name" value="A64143"/>
</dbReference>
<dbReference type="RefSeq" id="NP_438286.1">
    <property type="nucleotide sequence ID" value="NC_000907.1"/>
</dbReference>
<dbReference type="SMR" id="P71339"/>
<dbReference type="STRING" id="71421.HI_0112"/>
<dbReference type="EnsemblBacteria" id="AAC21791">
    <property type="protein sequence ID" value="AAC21791"/>
    <property type="gene ID" value="HI_0112"/>
</dbReference>
<dbReference type="KEGG" id="hin:HI_0112"/>
<dbReference type="PATRIC" id="fig|71421.8.peg.116"/>
<dbReference type="eggNOG" id="COG2963">
    <property type="taxonomic scope" value="Bacteria"/>
</dbReference>
<dbReference type="HOGENOM" id="CLU_027402_17_7_6"/>
<dbReference type="OrthoDB" id="5690554at2"/>
<dbReference type="BioCyc" id="HINF71421:G1GJ1-116-MONOMER"/>
<dbReference type="Proteomes" id="UP000000579">
    <property type="component" value="Chromosome"/>
</dbReference>
<dbReference type="Gene3D" id="1.10.10.60">
    <property type="entry name" value="Homeodomain-like"/>
    <property type="match status" value="1"/>
</dbReference>
<dbReference type="InterPro" id="IPR009057">
    <property type="entry name" value="Homeodomain-like_sf"/>
</dbReference>
<dbReference type="InterPro" id="IPR055247">
    <property type="entry name" value="InsJ-like_HTH"/>
</dbReference>
<dbReference type="InterPro" id="IPR052057">
    <property type="entry name" value="IS150/IS1296_orfA-like"/>
</dbReference>
<dbReference type="PANTHER" id="PTHR33795">
    <property type="entry name" value="INSERTION ELEMENT IS150 PROTEIN INSJ"/>
    <property type="match status" value="1"/>
</dbReference>
<dbReference type="PANTHER" id="PTHR33795:SF1">
    <property type="entry name" value="INSERTION ELEMENT IS150 PROTEIN INSJ"/>
    <property type="match status" value="1"/>
</dbReference>
<dbReference type="Pfam" id="PF13518">
    <property type="entry name" value="HTH_28"/>
    <property type="match status" value="1"/>
</dbReference>
<dbReference type="SUPFAM" id="SSF46689">
    <property type="entry name" value="Homeodomain-like"/>
    <property type="match status" value="1"/>
</dbReference>
<gene>
    <name type="ordered locus">HI_0112</name>
</gene>
<comment type="similarity">
    <text evidence="1">Belongs to the IS150/IS1296 orfA family.</text>
</comment>
<protein>
    <recommendedName>
        <fullName>Uncharacterized protein HI_0112</fullName>
    </recommendedName>
</protein>
<accession>P71339</accession>
<keyword id="KW-1185">Reference proteome</keyword>
<name>Y112_HAEIN</name>
<evidence type="ECO:0000305" key="1"/>
<proteinExistence type="inferred from homology"/>
<sequence>MIKARYFYLYKLIVRCRFFIAKYNTLFKQQVIEFYIQNGKNYSLISKHFQLDSRTLRHWINQFNHSRINGLAVLGKTRNYSLKFKLNVIQTVKNGQFL</sequence>
<feature type="chain" id="PRO_0000077890" description="Uncharacterized protein HI_0112">
    <location>
        <begin position="1"/>
        <end position="98"/>
    </location>
</feature>
<reference key="1">
    <citation type="journal article" date="1995" name="Science">
        <title>Whole-genome random sequencing and assembly of Haemophilus influenzae Rd.</title>
        <authorList>
            <person name="Fleischmann R.D."/>
            <person name="Adams M.D."/>
            <person name="White O."/>
            <person name="Clayton R.A."/>
            <person name="Kirkness E.F."/>
            <person name="Kerlavage A.R."/>
            <person name="Bult C.J."/>
            <person name="Tomb J.-F."/>
            <person name="Dougherty B.A."/>
            <person name="Merrick J.M."/>
            <person name="McKenney K."/>
            <person name="Sutton G.G."/>
            <person name="FitzHugh W."/>
            <person name="Fields C.A."/>
            <person name="Gocayne J.D."/>
            <person name="Scott J.D."/>
            <person name="Shirley R."/>
            <person name="Liu L.-I."/>
            <person name="Glodek A."/>
            <person name="Kelley J.M."/>
            <person name="Weidman J.F."/>
            <person name="Phillips C.A."/>
            <person name="Spriggs T."/>
            <person name="Hedblom E."/>
            <person name="Cotton M.D."/>
            <person name="Utterback T.R."/>
            <person name="Hanna M.C."/>
            <person name="Nguyen D.T."/>
            <person name="Saudek D.M."/>
            <person name="Brandon R.C."/>
            <person name="Fine L.D."/>
            <person name="Fritchman J.L."/>
            <person name="Fuhrmann J.L."/>
            <person name="Geoghagen N.S.M."/>
            <person name="Gnehm C.L."/>
            <person name="McDonald L.A."/>
            <person name="Small K.V."/>
            <person name="Fraser C.M."/>
            <person name="Smith H.O."/>
            <person name="Venter J.C."/>
        </authorList>
    </citation>
    <scope>NUCLEOTIDE SEQUENCE [LARGE SCALE GENOMIC DNA]</scope>
    <source>
        <strain>ATCC 51907 / DSM 11121 / KW20 / Rd</strain>
    </source>
</reference>